<dbReference type="EMBL" id="X12585">
    <property type="protein sequence ID" value="CAA31097.1"/>
    <property type="molecule type" value="Genomic_DNA"/>
</dbReference>
<dbReference type="PIR" id="S01969">
    <property type="entry name" value="R5EB1P"/>
</dbReference>
<dbReference type="SMR" id="P10055"/>
<dbReference type="STRING" id="585.DR95_2758"/>
<dbReference type="eggNOG" id="COG0080">
    <property type="taxonomic scope" value="Bacteria"/>
</dbReference>
<dbReference type="GO" id="GO:0022625">
    <property type="term" value="C:cytosolic large ribosomal subunit"/>
    <property type="evidence" value="ECO:0007669"/>
    <property type="project" value="TreeGrafter"/>
</dbReference>
<dbReference type="GO" id="GO:0070180">
    <property type="term" value="F:large ribosomal subunit rRNA binding"/>
    <property type="evidence" value="ECO:0007669"/>
    <property type="project" value="UniProtKB-UniRule"/>
</dbReference>
<dbReference type="GO" id="GO:0003735">
    <property type="term" value="F:structural constituent of ribosome"/>
    <property type="evidence" value="ECO:0007669"/>
    <property type="project" value="InterPro"/>
</dbReference>
<dbReference type="GO" id="GO:0006412">
    <property type="term" value="P:translation"/>
    <property type="evidence" value="ECO:0007669"/>
    <property type="project" value="UniProtKB-UniRule"/>
</dbReference>
<dbReference type="CDD" id="cd00349">
    <property type="entry name" value="Ribosomal_L11"/>
    <property type="match status" value="1"/>
</dbReference>
<dbReference type="FunFam" id="1.10.10.250:FF:000001">
    <property type="entry name" value="50S ribosomal protein L11"/>
    <property type="match status" value="1"/>
</dbReference>
<dbReference type="FunFam" id="3.30.1550.10:FF:000001">
    <property type="entry name" value="50S ribosomal protein L11"/>
    <property type="match status" value="1"/>
</dbReference>
<dbReference type="Gene3D" id="1.10.10.250">
    <property type="entry name" value="Ribosomal protein L11, C-terminal domain"/>
    <property type="match status" value="1"/>
</dbReference>
<dbReference type="Gene3D" id="3.30.1550.10">
    <property type="entry name" value="Ribosomal protein L11/L12, N-terminal domain"/>
    <property type="match status" value="1"/>
</dbReference>
<dbReference type="HAMAP" id="MF_00736">
    <property type="entry name" value="Ribosomal_uL11"/>
    <property type="match status" value="1"/>
</dbReference>
<dbReference type="InterPro" id="IPR000911">
    <property type="entry name" value="Ribosomal_uL11"/>
</dbReference>
<dbReference type="InterPro" id="IPR006519">
    <property type="entry name" value="Ribosomal_uL11_bac-typ"/>
</dbReference>
<dbReference type="InterPro" id="IPR020783">
    <property type="entry name" value="Ribosomal_uL11_C"/>
</dbReference>
<dbReference type="InterPro" id="IPR036769">
    <property type="entry name" value="Ribosomal_uL11_C_sf"/>
</dbReference>
<dbReference type="InterPro" id="IPR020785">
    <property type="entry name" value="Ribosomal_uL11_CS"/>
</dbReference>
<dbReference type="InterPro" id="IPR020784">
    <property type="entry name" value="Ribosomal_uL11_N"/>
</dbReference>
<dbReference type="InterPro" id="IPR036796">
    <property type="entry name" value="Ribosomal_uL11_N_sf"/>
</dbReference>
<dbReference type="NCBIfam" id="TIGR01632">
    <property type="entry name" value="L11_bact"/>
    <property type="match status" value="1"/>
</dbReference>
<dbReference type="PANTHER" id="PTHR11661">
    <property type="entry name" value="60S RIBOSOMAL PROTEIN L12"/>
    <property type="match status" value="1"/>
</dbReference>
<dbReference type="PANTHER" id="PTHR11661:SF1">
    <property type="entry name" value="LARGE RIBOSOMAL SUBUNIT PROTEIN UL11M"/>
    <property type="match status" value="1"/>
</dbReference>
<dbReference type="Pfam" id="PF00298">
    <property type="entry name" value="Ribosomal_L11"/>
    <property type="match status" value="1"/>
</dbReference>
<dbReference type="Pfam" id="PF03946">
    <property type="entry name" value="Ribosomal_L11_N"/>
    <property type="match status" value="1"/>
</dbReference>
<dbReference type="SMART" id="SM00649">
    <property type="entry name" value="RL11"/>
    <property type="match status" value="1"/>
</dbReference>
<dbReference type="SUPFAM" id="SSF54747">
    <property type="entry name" value="Ribosomal L11/L12e N-terminal domain"/>
    <property type="match status" value="1"/>
</dbReference>
<dbReference type="SUPFAM" id="SSF46906">
    <property type="entry name" value="Ribosomal protein L11, C-terminal domain"/>
    <property type="match status" value="1"/>
</dbReference>
<dbReference type="PROSITE" id="PS00359">
    <property type="entry name" value="RIBOSOMAL_L11"/>
    <property type="match status" value="1"/>
</dbReference>
<comment type="function">
    <text evidence="1">Forms part of the ribosomal stalk which helps the ribosome interact with GTP-bound translation factors.</text>
</comment>
<comment type="subunit">
    <text evidence="1">Part of the ribosomal stalk of the 50S ribosomal subunit. Interacts with L10 and the large rRNA to form the base of the stalk. L10 forms an elongated spine to which L12 dimers bind in a sequential fashion forming a multimeric L10(L12)X complex.</text>
</comment>
<comment type="PTM">
    <text evidence="1">One or more lysine residues are methylated.</text>
</comment>
<comment type="similarity">
    <text evidence="1">Belongs to the universal ribosomal protein uL11 family.</text>
</comment>
<sequence length="142" mass="14755">MAKKVQAYIKLQVSAGMANPSPPVGPALGQQGVNIMEFCKAFNAKTESVEKGLPIPVVITVIADRSFTFVTKTPPAAVLLKKAAGVKSGSGKPNKEKVGKITSAQVREIAETKAADLTGADVEAMMRSIAGTARSMGLVVED</sequence>
<feature type="initiator methionine" description="Removed">
    <location>
        <position position="1"/>
    </location>
</feature>
<feature type="chain" id="PRO_0000104342" description="Large ribosomal subunit protein uL11">
    <location>
        <begin position="2"/>
        <end position="142"/>
    </location>
</feature>
<reference key="1">
    <citation type="journal article" date="1987" name="Mol. Gen. Genet.">
        <title>Cloning and DNA sequence determination of the L11 ribosomal protein operon of Serratia marcescens and Proteus vulgaris: translational feedback regulation of the Escherichia coli L11 operon by heterologous L1 proteins.</title>
        <authorList>
            <person name="Sor F."/>
            <person name="Nomura M."/>
        </authorList>
    </citation>
    <scope>NUCLEOTIDE SEQUENCE [GENOMIC DNA]</scope>
    <source>
        <strain>NO3254</strain>
    </source>
</reference>
<gene>
    <name evidence="1" type="primary">rplK</name>
</gene>
<protein>
    <recommendedName>
        <fullName evidence="1">Large ribosomal subunit protein uL11</fullName>
    </recommendedName>
    <alternativeName>
        <fullName evidence="2">50S ribosomal protein L11</fullName>
    </alternativeName>
</protein>
<accession>P10055</accession>
<keyword id="KW-0488">Methylation</keyword>
<keyword id="KW-0687">Ribonucleoprotein</keyword>
<keyword id="KW-0689">Ribosomal protein</keyword>
<keyword id="KW-0694">RNA-binding</keyword>
<keyword id="KW-0699">rRNA-binding</keyword>
<name>RL11_PROVU</name>
<organism>
    <name type="scientific">Proteus vulgaris</name>
    <dbReference type="NCBI Taxonomy" id="585"/>
    <lineage>
        <taxon>Bacteria</taxon>
        <taxon>Pseudomonadati</taxon>
        <taxon>Pseudomonadota</taxon>
        <taxon>Gammaproteobacteria</taxon>
        <taxon>Enterobacterales</taxon>
        <taxon>Morganellaceae</taxon>
        <taxon>Proteus</taxon>
    </lineage>
</organism>
<proteinExistence type="inferred from homology"/>
<evidence type="ECO:0000255" key="1">
    <source>
        <dbReference type="HAMAP-Rule" id="MF_00736"/>
    </source>
</evidence>
<evidence type="ECO:0000305" key="2"/>